<feature type="chain" id="PRO_1000065871" description="HTH-type transcriptional repressor FabR">
    <location>
        <begin position="1"/>
        <end position="210"/>
    </location>
</feature>
<feature type="domain" description="HTH tetR-type" evidence="1">
    <location>
        <begin position="10"/>
        <end position="70"/>
    </location>
</feature>
<feature type="DNA-binding region" description="H-T-H motif" evidence="1">
    <location>
        <begin position="33"/>
        <end position="52"/>
    </location>
</feature>
<organism>
    <name type="scientific">Klebsiella pneumoniae subsp. pneumoniae (strain ATCC 700721 / MGH 78578)</name>
    <dbReference type="NCBI Taxonomy" id="272620"/>
    <lineage>
        <taxon>Bacteria</taxon>
        <taxon>Pseudomonadati</taxon>
        <taxon>Pseudomonadota</taxon>
        <taxon>Gammaproteobacteria</taxon>
        <taxon>Enterobacterales</taxon>
        <taxon>Enterobacteriaceae</taxon>
        <taxon>Klebsiella/Raoultella group</taxon>
        <taxon>Klebsiella</taxon>
        <taxon>Klebsiella pneumoniae complex</taxon>
    </lineage>
</organism>
<sequence>MGVRAQQKEKTRRSLVEAAFSQLSAERSFASLSLREVAREAGIAPTSFYRHFRDVDELGLTMVDESGLMLRQLMRQARQRIAKGGSVIRTSVSTFMEFIGNNPNAFRLLLRERSGTSAAFRAAVAREIQHFIAELADYLELENHMPRAFTEAQAEAMVTIVFSAGAEALDVGPEQRRQLEERLVLQLRMISKGAYYWYRREQEKMSHHSE</sequence>
<protein>
    <recommendedName>
        <fullName evidence="1">HTH-type transcriptional repressor FabR</fullName>
    </recommendedName>
</protein>
<proteinExistence type="inferred from homology"/>
<reference key="1">
    <citation type="submission" date="2006-09" db="EMBL/GenBank/DDBJ databases">
        <authorList>
            <consortium name="The Klebsiella pneumonia Genome Sequencing Project"/>
            <person name="McClelland M."/>
            <person name="Sanderson E.K."/>
            <person name="Spieth J."/>
            <person name="Clifton W.S."/>
            <person name="Latreille P."/>
            <person name="Sabo A."/>
            <person name="Pepin K."/>
            <person name="Bhonagiri V."/>
            <person name="Porwollik S."/>
            <person name="Ali J."/>
            <person name="Wilson R.K."/>
        </authorList>
    </citation>
    <scope>NUCLEOTIDE SEQUENCE [LARGE SCALE GENOMIC DNA]</scope>
    <source>
        <strain>ATCC 700721 / MGH 78578</strain>
    </source>
</reference>
<dbReference type="EMBL" id="CP000647">
    <property type="protein sequence ID" value="ABR79631.1"/>
    <property type="molecule type" value="Genomic_DNA"/>
</dbReference>
<dbReference type="SMR" id="A6TGE7"/>
<dbReference type="STRING" id="272620.KPN_04252"/>
<dbReference type="PaxDb" id="272620-KPN_04252"/>
<dbReference type="EnsemblBacteria" id="ABR79631">
    <property type="protein sequence ID" value="ABR79631"/>
    <property type="gene ID" value="KPN_04252"/>
</dbReference>
<dbReference type="KEGG" id="kpn:KPN_04252"/>
<dbReference type="HOGENOM" id="CLU_081861_0_0_6"/>
<dbReference type="Proteomes" id="UP000000265">
    <property type="component" value="Chromosome"/>
</dbReference>
<dbReference type="GO" id="GO:0005737">
    <property type="term" value="C:cytoplasm"/>
    <property type="evidence" value="ECO:0007669"/>
    <property type="project" value="UniProtKB-SubCell"/>
</dbReference>
<dbReference type="GO" id="GO:0003677">
    <property type="term" value="F:DNA binding"/>
    <property type="evidence" value="ECO:0007669"/>
    <property type="project" value="UniProtKB-KW"/>
</dbReference>
<dbReference type="GO" id="GO:0003700">
    <property type="term" value="F:DNA-binding transcription factor activity"/>
    <property type="evidence" value="ECO:0007669"/>
    <property type="project" value="UniProtKB-UniRule"/>
</dbReference>
<dbReference type="GO" id="GO:0006633">
    <property type="term" value="P:fatty acid biosynthetic process"/>
    <property type="evidence" value="ECO:0007669"/>
    <property type="project" value="UniProtKB-UniRule"/>
</dbReference>
<dbReference type="GO" id="GO:0045717">
    <property type="term" value="P:negative regulation of fatty acid biosynthetic process"/>
    <property type="evidence" value="ECO:0007669"/>
    <property type="project" value="UniProtKB-UniRule"/>
</dbReference>
<dbReference type="FunFam" id="1.10.10.60:FF:000034">
    <property type="entry name" value="HTH-type transcriptional repressor FabR"/>
    <property type="match status" value="1"/>
</dbReference>
<dbReference type="FunFam" id="1.10.357.10:FF:000001">
    <property type="entry name" value="HTH-type transcriptional repressor FabR"/>
    <property type="match status" value="1"/>
</dbReference>
<dbReference type="Gene3D" id="1.10.10.60">
    <property type="entry name" value="Homeodomain-like"/>
    <property type="match status" value="1"/>
</dbReference>
<dbReference type="Gene3D" id="1.10.357.10">
    <property type="entry name" value="Tetracycline Repressor, domain 2"/>
    <property type="match status" value="1"/>
</dbReference>
<dbReference type="HAMAP" id="MF_01190">
    <property type="entry name" value="HTH_type_FabR"/>
    <property type="match status" value="1"/>
</dbReference>
<dbReference type="InterPro" id="IPR054129">
    <property type="entry name" value="DesT_TetR_C"/>
</dbReference>
<dbReference type="InterPro" id="IPR009057">
    <property type="entry name" value="Homeodomain-like_sf"/>
</dbReference>
<dbReference type="InterPro" id="IPR001647">
    <property type="entry name" value="HTH_TetR"/>
</dbReference>
<dbReference type="InterPro" id="IPR050692">
    <property type="entry name" value="HTH_transcr_repressor_FabR"/>
</dbReference>
<dbReference type="InterPro" id="IPR023764">
    <property type="entry name" value="Tscrpt_reg_HTH_FabR"/>
</dbReference>
<dbReference type="NCBIfam" id="NF008402">
    <property type="entry name" value="PRK11202.1"/>
    <property type="match status" value="1"/>
</dbReference>
<dbReference type="PANTHER" id="PTHR47752">
    <property type="entry name" value="HTH-TYPE TRANSCRIPTIONAL REPRESSOR FABR"/>
    <property type="match status" value="1"/>
</dbReference>
<dbReference type="PANTHER" id="PTHR47752:SF1">
    <property type="entry name" value="HTH-TYPE TRANSCRIPTIONAL REPRESSOR FABR"/>
    <property type="match status" value="1"/>
</dbReference>
<dbReference type="Pfam" id="PF21943">
    <property type="entry name" value="TetR_C_46"/>
    <property type="match status" value="1"/>
</dbReference>
<dbReference type="Pfam" id="PF00440">
    <property type="entry name" value="TetR_N"/>
    <property type="match status" value="1"/>
</dbReference>
<dbReference type="SUPFAM" id="SSF46689">
    <property type="entry name" value="Homeodomain-like"/>
    <property type="match status" value="1"/>
</dbReference>
<dbReference type="PROSITE" id="PS50977">
    <property type="entry name" value="HTH_TETR_2"/>
    <property type="match status" value="1"/>
</dbReference>
<evidence type="ECO:0000255" key="1">
    <source>
        <dbReference type="HAMAP-Rule" id="MF_01190"/>
    </source>
</evidence>
<comment type="function">
    <text evidence="1">Represses the transcription of fabB, involved in unsaturated fatty acid (UFA) biosynthesis. By controlling UFA production, FabR directly influences the physical properties of the membrane bilayer.</text>
</comment>
<comment type="subunit">
    <text evidence="1">Homodimer.</text>
</comment>
<comment type="subcellular location">
    <subcellularLocation>
        <location evidence="1">Cytoplasm</location>
    </subcellularLocation>
</comment>
<gene>
    <name evidence="1" type="primary">fabR</name>
    <name type="ordered locus">KPN78578_42070</name>
    <name type="ORF">KPN_04252</name>
</gene>
<accession>A6TGE7</accession>
<keyword id="KW-0963">Cytoplasm</keyword>
<keyword id="KW-0238">DNA-binding</keyword>
<keyword id="KW-0275">Fatty acid biosynthesis</keyword>
<keyword id="KW-0276">Fatty acid metabolism</keyword>
<keyword id="KW-0444">Lipid biosynthesis</keyword>
<keyword id="KW-0443">Lipid metabolism</keyword>
<keyword id="KW-0678">Repressor</keyword>
<keyword id="KW-0804">Transcription</keyword>
<keyword id="KW-0805">Transcription regulation</keyword>
<name>FABR_KLEP7</name>